<feature type="signal peptide" evidence="2">
    <location>
        <begin position="1"/>
        <end position="21"/>
    </location>
</feature>
<feature type="propeptide" id="PRO_0000398500" evidence="1">
    <location>
        <begin position="22"/>
        <end position="53"/>
    </location>
</feature>
<feature type="peptide" id="PRO_0000398501" description="Kappa-theraphotoxin-Cg2b">
    <location>
        <begin position="54"/>
        <end position="83"/>
    </location>
</feature>
<feature type="disulfide bond" evidence="1">
    <location>
        <begin position="55"/>
        <end position="69"/>
    </location>
</feature>
<feature type="disulfide bond" evidence="1">
    <location>
        <begin position="62"/>
        <end position="74"/>
    </location>
</feature>
<feature type="disulfide bond" evidence="1">
    <location>
        <begin position="68"/>
        <end position="78"/>
    </location>
</feature>
<dbReference type="EMBL" id="EU233847">
    <property type="protein sequence ID" value="ABY71666.1"/>
    <property type="molecule type" value="mRNA"/>
</dbReference>
<dbReference type="ArachnoServer" id="AS000796">
    <property type="toxin name" value="kappa-theraphotoxin-Cg2b"/>
</dbReference>
<dbReference type="GO" id="GO:0005576">
    <property type="term" value="C:extracellular region"/>
    <property type="evidence" value="ECO:0007669"/>
    <property type="project" value="UniProtKB-SubCell"/>
</dbReference>
<dbReference type="GO" id="GO:0099106">
    <property type="term" value="F:ion channel regulator activity"/>
    <property type="evidence" value="ECO:0007669"/>
    <property type="project" value="UniProtKB-KW"/>
</dbReference>
<dbReference type="GO" id="GO:0090729">
    <property type="term" value="F:toxin activity"/>
    <property type="evidence" value="ECO:0007669"/>
    <property type="project" value="UniProtKB-KW"/>
</dbReference>
<dbReference type="SUPFAM" id="SSF57059">
    <property type="entry name" value="omega toxin-like"/>
    <property type="match status" value="1"/>
</dbReference>
<comment type="function">
    <text>Probable ion channel inhibitor.</text>
</comment>
<comment type="subcellular location">
    <subcellularLocation>
        <location evidence="1">Secreted</location>
    </subcellularLocation>
</comment>
<comment type="tissue specificity">
    <text>Expressed by the venom gland.</text>
</comment>
<comment type="domain">
    <text evidence="1">The presence of a 'disulfide through disulfide knot' structurally defines this protein as a knottin.</text>
</comment>
<comment type="similarity">
    <text evidence="3">Belongs to the neurotoxin 30 (phrixotoxin) family.</text>
</comment>
<evidence type="ECO:0000250" key="1"/>
<evidence type="ECO:0000255" key="2"/>
<evidence type="ECO:0000305" key="3"/>
<sequence>MKGSAFAIILGLVVLCACSFAEDEQDQFASPNELLRSMFLESRHELIPEVEGRYCQKWMWTCDSERKCCEGYVCELWCKYNMG</sequence>
<organism>
    <name type="scientific">Chilobrachys guangxiensis</name>
    <name type="common">Chinese earth tiger tarantula</name>
    <name type="synonym">Chilobrachys jingzhao</name>
    <dbReference type="NCBI Taxonomy" id="278060"/>
    <lineage>
        <taxon>Eukaryota</taxon>
        <taxon>Metazoa</taxon>
        <taxon>Ecdysozoa</taxon>
        <taxon>Arthropoda</taxon>
        <taxon>Chelicerata</taxon>
        <taxon>Arachnida</taxon>
        <taxon>Araneae</taxon>
        <taxon>Mygalomorphae</taxon>
        <taxon>Theraphosidae</taxon>
        <taxon>Chilobrachys</taxon>
    </lineage>
</organism>
<accession>B1P1B6</accession>
<protein>
    <recommendedName>
        <fullName>Kappa-theraphotoxin-Cg2b</fullName>
        <shortName>Kappa-TRTX-Cg2b</shortName>
    </recommendedName>
    <alternativeName>
        <fullName>Jingzhaotoxin-46</fullName>
        <shortName>JZTX-46</shortName>
    </alternativeName>
</protein>
<keyword id="KW-1015">Disulfide bond</keyword>
<keyword id="KW-0872">Ion channel impairing toxin</keyword>
<keyword id="KW-0960">Knottin</keyword>
<keyword id="KW-0964">Secreted</keyword>
<keyword id="KW-0732">Signal</keyword>
<keyword id="KW-0800">Toxin</keyword>
<name>JZT46_CHIGU</name>
<reference key="1">
    <citation type="journal article" date="2008" name="Cell. Mol. Life Sci.">
        <title>Molecular diversity and evolution of cystine knot toxins of the tarantula Chilobrachys jingzhao.</title>
        <authorList>
            <person name="Chen J."/>
            <person name="Deng M."/>
            <person name="He Q."/>
            <person name="Meng E."/>
            <person name="Jiang L."/>
            <person name="Liao Z."/>
            <person name="Rong M."/>
            <person name="Liang S."/>
        </authorList>
    </citation>
    <scope>NUCLEOTIDE SEQUENCE [LARGE SCALE MRNA]</scope>
    <source>
        <tissue>Venom gland</tissue>
    </source>
</reference>
<proteinExistence type="evidence at transcript level"/>